<comment type="function">
    <text evidence="1">Catalyzes the ATP-dependent phosphorylation of L-homoserine to L-homoserine phosphate.</text>
</comment>
<comment type="catalytic activity">
    <reaction evidence="1">
        <text>L-homoserine + ATP = O-phospho-L-homoserine + ADP + H(+)</text>
        <dbReference type="Rhea" id="RHEA:13985"/>
        <dbReference type="ChEBI" id="CHEBI:15378"/>
        <dbReference type="ChEBI" id="CHEBI:30616"/>
        <dbReference type="ChEBI" id="CHEBI:57476"/>
        <dbReference type="ChEBI" id="CHEBI:57590"/>
        <dbReference type="ChEBI" id="CHEBI:456216"/>
        <dbReference type="EC" id="2.7.1.39"/>
    </reaction>
</comment>
<comment type="pathway">
    <text evidence="1">Amino-acid biosynthesis; L-threonine biosynthesis; L-threonine from L-aspartate: step 4/5.</text>
</comment>
<comment type="subcellular location">
    <subcellularLocation>
        <location evidence="1">Cytoplasm</location>
    </subcellularLocation>
</comment>
<comment type="similarity">
    <text evidence="1">Belongs to the GHMP kinase family. Homoserine kinase subfamily.</text>
</comment>
<gene>
    <name evidence="1" type="primary">thrB</name>
    <name type="ordered locus">Cbei_1294</name>
</gene>
<sequence>MITVRVPATSANMGPGFDTLGIALNLYNDFGFREIEDGLKFNGMPEEFCNEDNIIYKAMKYCFDKAGYKIKGLEISEIKQDVPVSRGLGSSSTCIVGGLVGANEILGKKFSEEELLEMAVEIEGHPDNVAPALLGGMVVAIFDENKTYYDKIDVKNGIKFISIIPNFRLSTEEARKVLPKEISLKDGVYNVSRAALMVACFSSGKYELLRYACKDAFHQNYRSKLIPGFEEVYNKSYELGALACYLSGAGPTIMAIIDEKDERFSNKLKEFLQIKGLEWNILGLSLDNAGATIIEGTK</sequence>
<proteinExistence type="inferred from homology"/>
<dbReference type="EC" id="2.7.1.39" evidence="1"/>
<dbReference type="EMBL" id="CP000721">
    <property type="protein sequence ID" value="ABR33474.1"/>
    <property type="molecule type" value="Genomic_DNA"/>
</dbReference>
<dbReference type="RefSeq" id="WP_011968628.1">
    <property type="nucleotide sequence ID" value="NC_009617.1"/>
</dbReference>
<dbReference type="SMR" id="A6LSZ4"/>
<dbReference type="KEGG" id="cbe:Cbei_1294"/>
<dbReference type="eggNOG" id="COG0083">
    <property type="taxonomic scope" value="Bacteria"/>
</dbReference>
<dbReference type="HOGENOM" id="CLU_041243_0_0_9"/>
<dbReference type="UniPathway" id="UPA00050">
    <property type="reaction ID" value="UER00064"/>
</dbReference>
<dbReference type="Proteomes" id="UP000000565">
    <property type="component" value="Chromosome"/>
</dbReference>
<dbReference type="GO" id="GO:0005737">
    <property type="term" value="C:cytoplasm"/>
    <property type="evidence" value="ECO:0007669"/>
    <property type="project" value="UniProtKB-SubCell"/>
</dbReference>
<dbReference type="GO" id="GO:0005524">
    <property type="term" value="F:ATP binding"/>
    <property type="evidence" value="ECO:0007669"/>
    <property type="project" value="UniProtKB-UniRule"/>
</dbReference>
<dbReference type="GO" id="GO:0004413">
    <property type="term" value="F:homoserine kinase activity"/>
    <property type="evidence" value="ECO:0007669"/>
    <property type="project" value="UniProtKB-UniRule"/>
</dbReference>
<dbReference type="GO" id="GO:0009088">
    <property type="term" value="P:threonine biosynthetic process"/>
    <property type="evidence" value="ECO:0007669"/>
    <property type="project" value="UniProtKB-UniRule"/>
</dbReference>
<dbReference type="Gene3D" id="3.30.230.10">
    <property type="match status" value="1"/>
</dbReference>
<dbReference type="Gene3D" id="3.30.70.890">
    <property type="entry name" value="GHMP kinase, C-terminal domain"/>
    <property type="match status" value="1"/>
</dbReference>
<dbReference type="HAMAP" id="MF_00384">
    <property type="entry name" value="Homoser_kinase"/>
    <property type="match status" value="1"/>
</dbReference>
<dbReference type="InterPro" id="IPR013750">
    <property type="entry name" value="GHMP_kinase_C_dom"/>
</dbReference>
<dbReference type="InterPro" id="IPR036554">
    <property type="entry name" value="GHMP_kinase_C_sf"/>
</dbReference>
<dbReference type="InterPro" id="IPR006204">
    <property type="entry name" value="GHMP_kinase_N_dom"/>
</dbReference>
<dbReference type="InterPro" id="IPR006203">
    <property type="entry name" value="GHMP_knse_ATP-bd_CS"/>
</dbReference>
<dbReference type="InterPro" id="IPR000870">
    <property type="entry name" value="Homoserine_kinase"/>
</dbReference>
<dbReference type="InterPro" id="IPR020568">
    <property type="entry name" value="Ribosomal_Su5_D2-typ_SF"/>
</dbReference>
<dbReference type="InterPro" id="IPR014721">
    <property type="entry name" value="Ribsml_uS5_D2-typ_fold_subgr"/>
</dbReference>
<dbReference type="NCBIfam" id="TIGR00191">
    <property type="entry name" value="thrB"/>
    <property type="match status" value="1"/>
</dbReference>
<dbReference type="PANTHER" id="PTHR20861:SF1">
    <property type="entry name" value="HOMOSERINE KINASE"/>
    <property type="match status" value="1"/>
</dbReference>
<dbReference type="PANTHER" id="PTHR20861">
    <property type="entry name" value="HOMOSERINE/4-DIPHOSPHOCYTIDYL-2-C-METHYL-D-ERYTHRITOL KINASE"/>
    <property type="match status" value="1"/>
</dbReference>
<dbReference type="Pfam" id="PF08544">
    <property type="entry name" value="GHMP_kinases_C"/>
    <property type="match status" value="1"/>
</dbReference>
<dbReference type="Pfam" id="PF00288">
    <property type="entry name" value="GHMP_kinases_N"/>
    <property type="match status" value="1"/>
</dbReference>
<dbReference type="PIRSF" id="PIRSF000676">
    <property type="entry name" value="Homoser_kin"/>
    <property type="match status" value="1"/>
</dbReference>
<dbReference type="PRINTS" id="PR00958">
    <property type="entry name" value="HOMSERKINASE"/>
</dbReference>
<dbReference type="SUPFAM" id="SSF55060">
    <property type="entry name" value="GHMP Kinase, C-terminal domain"/>
    <property type="match status" value="1"/>
</dbReference>
<dbReference type="SUPFAM" id="SSF54211">
    <property type="entry name" value="Ribosomal protein S5 domain 2-like"/>
    <property type="match status" value="1"/>
</dbReference>
<dbReference type="PROSITE" id="PS00627">
    <property type="entry name" value="GHMP_KINASES_ATP"/>
    <property type="match status" value="1"/>
</dbReference>
<keyword id="KW-0028">Amino-acid biosynthesis</keyword>
<keyword id="KW-0067">ATP-binding</keyword>
<keyword id="KW-0963">Cytoplasm</keyword>
<keyword id="KW-0418">Kinase</keyword>
<keyword id="KW-0547">Nucleotide-binding</keyword>
<keyword id="KW-0791">Threonine biosynthesis</keyword>
<keyword id="KW-0808">Transferase</keyword>
<evidence type="ECO:0000255" key="1">
    <source>
        <dbReference type="HAMAP-Rule" id="MF_00384"/>
    </source>
</evidence>
<organism>
    <name type="scientific">Clostridium beijerinckii (strain ATCC 51743 / NCIMB 8052)</name>
    <name type="common">Clostridium acetobutylicum</name>
    <dbReference type="NCBI Taxonomy" id="290402"/>
    <lineage>
        <taxon>Bacteria</taxon>
        <taxon>Bacillati</taxon>
        <taxon>Bacillota</taxon>
        <taxon>Clostridia</taxon>
        <taxon>Eubacteriales</taxon>
        <taxon>Clostridiaceae</taxon>
        <taxon>Clostridium</taxon>
    </lineage>
</organism>
<feature type="chain" id="PRO_1000080119" description="Homoserine kinase">
    <location>
        <begin position="1"/>
        <end position="298"/>
    </location>
</feature>
<feature type="binding site" evidence="1">
    <location>
        <begin position="83"/>
        <end position="93"/>
    </location>
    <ligand>
        <name>ATP</name>
        <dbReference type="ChEBI" id="CHEBI:30616"/>
    </ligand>
</feature>
<reference key="1">
    <citation type="submission" date="2007-06" db="EMBL/GenBank/DDBJ databases">
        <title>Complete sequence of Clostridium beijerinckii NCIMB 8052.</title>
        <authorList>
            <consortium name="US DOE Joint Genome Institute"/>
            <person name="Copeland A."/>
            <person name="Lucas S."/>
            <person name="Lapidus A."/>
            <person name="Barry K."/>
            <person name="Detter J.C."/>
            <person name="Glavina del Rio T."/>
            <person name="Hammon N."/>
            <person name="Israni S."/>
            <person name="Dalin E."/>
            <person name="Tice H."/>
            <person name="Pitluck S."/>
            <person name="Sims D."/>
            <person name="Brettin T."/>
            <person name="Bruce D."/>
            <person name="Tapia R."/>
            <person name="Brainard J."/>
            <person name="Schmutz J."/>
            <person name="Larimer F."/>
            <person name="Land M."/>
            <person name="Hauser L."/>
            <person name="Kyrpides N."/>
            <person name="Mikhailova N."/>
            <person name="Bennet G."/>
            <person name="Cann I."/>
            <person name="Chen J.-S."/>
            <person name="Contreras A.L."/>
            <person name="Jones D."/>
            <person name="Kashket E."/>
            <person name="Mitchell W."/>
            <person name="Stoddard S."/>
            <person name="Schwarz W."/>
            <person name="Qureshi N."/>
            <person name="Young M."/>
            <person name="Shi Z."/>
            <person name="Ezeji T."/>
            <person name="White B."/>
            <person name="Blaschek H."/>
            <person name="Richardson P."/>
        </authorList>
    </citation>
    <scope>NUCLEOTIDE SEQUENCE [LARGE SCALE GENOMIC DNA]</scope>
    <source>
        <strain>ATCC 51743 / NCIMB 8052</strain>
    </source>
</reference>
<name>KHSE_CLOB8</name>
<protein>
    <recommendedName>
        <fullName evidence="1">Homoserine kinase</fullName>
        <shortName evidence="1">HK</shortName>
        <shortName evidence="1">HSK</shortName>
        <ecNumber evidence="1">2.7.1.39</ecNumber>
    </recommendedName>
</protein>
<accession>A6LSZ4</accession>